<keyword id="KW-0067">ATP-binding</keyword>
<keyword id="KW-0963">Cytoplasm</keyword>
<keyword id="KW-0206">Cytoskeleton</keyword>
<keyword id="KW-0378">Hydrolase</keyword>
<keyword id="KW-0547">Nucleotide-binding</keyword>
<keyword id="KW-1185">Reference proteome</keyword>
<protein>
    <recommendedName>
        <fullName>Actin-85C</fullName>
        <ecNumber evidence="1">3.6.4.-</ecNumber>
    </recommendedName>
</protein>
<reference key="1">
    <citation type="journal article" date="1990" name="J. Mol. Evol.">
        <title>Independent gene evolution in the potato actin gene family demonstrated by phylogenetic procedures for resolving gene conversions and the phylogeny of angiosperm actin genes.</title>
        <authorList>
            <person name="Drouin G."/>
            <person name="Dover G.A."/>
        </authorList>
    </citation>
    <scope>NUCLEOTIDE SEQUENCE [GENOMIC DNA]</scope>
    <source>
        <strain>cv. Maris Piper</strain>
        <tissue>Leaf</tissue>
    </source>
</reference>
<sequence>AGFAGDDAPRAVFPSIVGRPRHTGVMVGMGQKDAYVGDEAQSKRGILTLKYPIEHGIVSNWDDMEKIWHHTFYNELRVAPEEHPVLLTEAPLNPKANREKMTQIMFETFNTPAMYVAIQAVLSLYASGRTTGIVLDSGDGVSHTVPIYEGYALPHAILRLDLAGRDLTDHLMKILTERGYSFTTTAEREIVRDVK</sequence>
<feature type="chain" id="PRO_0000089017" description="Actin-85C">
    <location>
        <begin position="1" status="less than"/>
        <end position="195" status="greater than"/>
    </location>
</feature>
<feature type="non-terminal residue">
    <location>
        <position position="1"/>
    </location>
</feature>
<feature type="non-terminal residue">
    <location>
        <position position="195"/>
    </location>
</feature>
<gene>
    <name type="primary">AC85C</name>
</gene>
<dbReference type="EC" id="3.6.4.-" evidence="1"/>
<dbReference type="EMBL" id="X55747">
    <property type="protein sequence ID" value="CAA39277.1"/>
    <property type="molecule type" value="Genomic_DNA"/>
</dbReference>
<dbReference type="PIR" id="S20097">
    <property type="entry name" value="S20097"/>
</dbReference>
<dbReference type="SMR" id="P30170"/>
<dbReference type="FunCoup" id="P30170">
    <property type="interactions" value="19"/>
</dbReference>
<dbReference type="STRING" id="4113.P30170"/>
<dbReference type="InParanoid" id="P30170"/>
<dbReference type="Proteomes" id="UP000011115">
    <property type="component" value="Unassembled WGS sequence"/>
</dbReference>
<dbReference type="ExpressionAtlas" id="P30170">
    <property type="expression patterns" value="baseline and differential"/>
</dbReference>
<dbReference type="GO" id="GO:0005737">
    <property type="term" value="C:cytoplasm"/>
    <property type="evidence" value="ECO:0007669"/>
    <property type="project" value="UniProtKB-KW"/>
</dbReference>
<dbReference type="GO" id="GO:0005856">
    <property type="term" value="C:cytoskeleton"/>
    <property type="evidence" value="ECO:0007669"/>
    <property type="project" value="UniProtKB-SubCell"/>
</dbReference>
<dbReference type="GO" id="GO:0005524">
    <property type="term" value="F:ATP binding"/>
    <property type="evidence" value="ECO:0007669"/>
    <property type="project" value="UniProtKB-KW"/>
</dbReference>
<dbReference type="GO" id="GO:0016787">
    <property type="term" value="F:hydrolase activity"/>
    <property type="evidence" value="ECO:0007669"/>
    <property type="project" value="UniProtKB-KW"/>
</dbReference>
<dbReference type="FunFam" id="2.30.36.70:FF:000001">
    <property type="entry name" value="Actin, alpha skeletal muscle"/>
    <property type="match status" value="1"/>
</dbReference>
<dbReference type="FunFam" id="3.30.420.40:FF:000291">
    <property type="entry name" value="Actin, alpha skeletal muscle"/>
    <property type="match status" value="1"/>
</dbReference>
<dbReference type="Gene3D" id="3.30.420.40">
    <property type="match status" value="2"/>
</dbReference>
<dbReference type="Gene3D" id="2.30.36.70">
    <property type="entry name" value="Actin, Chain A, domain 2"/>
    <property type="match status" value="1"/>
</dbReference>
<dbReference type="Gene3D" id="3.90.640.10">
    <property type="entry name" value="Actin, Chain A, domain 4"/>
    <property type="match status" value="1"/>
</dbReference>
<dbReference type="InterPro" id="IPR004000">
    <property type="entry name" value="Actin"/>
</dbReference>
<dbReference type="InterPro" id="IPR020902">
    <property type="entry name" value="Actin/actin-like_CS"/>
</dbReference>
<dbReference type="InterPro" id="IPR004001">
    <property type="entry name" value="Actin_CS"/>
</dbReference>
<dbReference type="InterPro" id="IPR043129">
    <property type="entry name" value="ATPase_NBD"/>
</dbReference>
<dbReference type="PANTHER" id="PTHR11937">
    <property type="entry name" value="ACTIN"/>
    <property type="match status" value="1"/>
</dbReference>
<dbReference type="Pfam" id="PF00022">
    <property type="entry name" value="Actin"/>
    <property type="match status" value="1"/>
</dbReference>
<dbReference type="PRINTS" id="PR00190">
    <property type="entry name" value="ACTIN"/>
</dbReference>
<dbReference type="SMART" id="SM00268">
    <property type="entry name" value="ACTIN"/>
    <property type="match status" value="1"/>
</dbReference>
<dbReference type="SUPFAM" id="SSF53067">
    <property type="entry name" value="Actin-like ATPase domain"/>
    <property type="match status" value="2"/>
</dbReference>
<dbReference type="PROSITE" id="PS00406">
    <property type="entry name" value="ACTINS_1"/>
    <property type="match status" value="1"/>
</dbReference>
<dbReference type="PROSITE" id="PS01132">
    <property type="entry name" value="ACTINS_ACT_LIKE"/>
    <property type="match status" value="1"/>
</dbReference>
<proteinExistence type="inferred from homology"/>
<evidence type="ECO:0000250" key="1">
    <source>
        <dbReference type="UniProtKB" id="P68137"/>
    </source>
</evidence>
<evidence type="ECO:0000305" key="2"/>
<organism>
    <name type="scientific">Solanum tuberosum</name>
    <name type="common">Potato</name>
    <dbReference type="NCBI Taxonomy" id="4113"/>
    <lineage>
        <taxon>Eukaryota</taxon>
        <taxon>Viridiplantae</taxon>
        <taxon>Streptophyta</taxon>
        <taxon>Embryophyta</taxon>
        <taxon>Tracheophyta</taxon>
        <taxon>Spermatophyta</taxon>
        <taxon>Magnoliopsida</taxon>
        <taxon>eudicotyledons</taxon>
        <taxon>Gunneridae</taxon>
        <taxon>Pentapetalae</taxon>
        <taxon>asterids</taxon>
        <taxon>lamiids</taxon>
        <taxon>Solanales</taxon>
        <taxon>Solanaceae</taxon>
        <taxon>Solanoideae</taxon>
        <taxon>Solaneae</taxon>
        <taxon>Solanum</taxon>
    </lineage>
</organism>
<comment type="function">
    <text>Actins are highly conserved proteins that are involved in various types of cell motility and are ubiquitously expressed in all eukaryotic cells. Essential component of cell cytoskeleton; plays an important role in cytoplasmic streaming, cell shape determination, cell division, organelle movement and extension growth.</text>
</comment>
<comment type="catalytic activity">
    <reaction evidence="1">
        <text>ATP + H2O = ADP + phosphate + H(+)</text>
        <dbReference type="Rhea" id="RHEA:13065"/>
        <dbReference type="ChEBI" id="CHEBI:15377"/>
        <dbReference type="ChEBI" id="CHEBI:15378"/>
        <dbReference type="ChEBI" id="CHEBI:30616"/>
        <dbReference type="ChEBI" id="CHEBI:43474"/>
        <dbReference type="ChEBI" id="CHEBI:456216"/>
    </reaction>
</comment>
<comment type="subcellular location">
    <subcellularLocation>
        <location>Cytoplasm</location>
        <location>Cytoskeleton</location>
    </subcellularLocation>
</comment>
<comment type="miscellaneous">
    <text>There are at least 13 actin genes in potato.</text>
</comment>
<comment type="similarity">
    <text evidence="2">Belongs to the actin family.</text>
</comment>
<name>ACT10_SOLTU</name>
<accession>P30170</accession>